<gene>
    <name type="primary">RHO</name>
</gene>
<protein>
    <recommendedName>
        <fullName>Rhodopsin</fullName>
    </recommendedName>
</protein>
<evidence type="ECO:0000250" key="1">
    <source>
        <dbReference type="UniProtKB" id="P02699"/>
    </source>
</evidence>
<evidence type="ECO:0000250" key="2">
    <source>
        <dbReference type="UniProtKB" id="P08100"/>
    </source>
</evidence>
<evidence type="ECO:0000250" key="3">
    <source>
        <dbReference type="UniProtKB" id="P31356"/>
    </source>
</evidence>
<evidence type="ECO:0000255" key="4"/>
<evidence type="ECO:0000255" key="5">
    <source>
        <dbReference type="PROSITE-ProRule" id="PRU00521"/>
    </source>
</evidence>
<evidence type="ECO:0000256" key="6">
    <source>
        <dbReference type="SAM" id="MobiDB-lite"/>
    </source>
</evidence>
<evidence type="ECO:0000305" key="7"/>
<reference key="1">
    <citation type="journal article" date="1988" name="FEBS Lett.">
        <title>Octopus rhodopsin. Amino acid sequence deduced from cDNA.</title>
        <authorList>
            <person name="Ovchinnikov Y.A."/>
            <person name="Abdulaev N.G."/>
            <person name="Zolotarev A.S."/>
            <person name="Artamonov I.D."/>
            <person name="Bespalov I.A."/>
            <person name="Dergachev A.E."/>
            <person name="Tsuda M."/>
        </authorList>
    </citation>
    <scope>NUCLEOTIDE SEQUENCE [MRNA]</scope>
</reference>
<reference key="2">
    <citation type="submission" date="1988-10" db="EMBL/GenBank/DDBJ databases">
        <authorList>
            <person name="Abdulaev N.G."/>
        </authorList>
    </citation>
    <scope>SEQUENCE REVISION TO 399</scope>
</reference>
<organism>
    <name type="scientific">Enteroctopus dofleini</name>
    <name type="common">North Pacific giant octopus</name>
    <name type="synonym">Octopus dofleini</name>
    <dbReference type="NCBI Taxonomy" id="267067"/>
    <lineage>
        <taxon>Eukaryota</taxon>
        <taxon>Metazoa</taxon>
        <taxon>Spiralia</taxon>
        <taxon>Lophotrochozoa</taxon>
        <taxon>Mollusca</taxon>
        <taxon>Cephalopoda</taxon>
        <taxon>Coleoidea</taxon>
        <taxon>Octopodiformes</taxon>
        <taxon>Octopoda</taxon>
        <taxon>Incirrata</taxon>
        <taxon>Octopodidae</taxon>
        <taxon>Enteroctopus</taxon>
    </lineage>
</organism>
<dbReference type="EMBL" id="X07797">
    <property type="protein sequence ID" value="CAA30644.1"/>
    <property type="molecule type" value="mRNA"/>
</dbReference>
<dbReference type="PIR" id="S00610">
    <property type="entry name" value="OOOCG"/>
</dbReference>
<dbReference type="SMR" id="P09241"/>
<dbReference type="GlyCosmos" id="P09241">
    <property type="glycosylation" value="1 site, No reported glycans"/>
</dbReference>
<dbReference type="GO" id="GO:0042995">
    <property type="term" value="C:cell projection"/>
    <property type="evidence" value="ECO:0007669"/>
    <property type="project" value="UniProtKB-KW"/>
</dbReference>
<dbReference type="GO" id="GO:0016020">
    <property type="term" value="C:membrane"/>
    <property type="evidence" value="ECO:0000250"/>
    <property type="project" value="UniProtKB"/>
</dbReference>
<dbReference type="GO" id="GO:0005886">
    <property type="term" value="C:plasma membrane"/>
    <property type="evidence" value="ECO:0000250"/>
    <property type="project" value="UniProtKB"/>
</dbReference>
<dbReference type="GO" id="GO:0004930">
    <property type="term" value="F:G protein-coupled receptor activity"/>
    <property type="evidence" value="ECO:0007669"/>
    <property type="project" value="UniProtKB-KW"/>
</dbReference>
<dbReference type="GO" id="GO:0009881">
    <property type="term" value="F:photoreceptor activity"/>
    <property type="evidence" value="ECO:0007669"/>
    <property type="project" value="UniProtKB-KW"/>
</dbReference>
<dbReference type="GO" id="GO:0016918">
    <property type="term" value="F:retinal binding"/>
    <property type="evidence" value="ECO:0000250"/>
    <property type="project" value="UniProtKB"/>
</dbReference>
<dbReference type="GO" id="GO:0007602">
    <property type="term" value="P:phototransduction"/>
    <property type="evidence" value="ECO:0007669"/>
    <property type="project" value="UniProtKB-KW"/>
</dbReference>
<dbReference type="GO" id="GO:0007601">
    <property type="term" value="P:visual perception"/>
    <property type="evidence" value="ECO:0007669"/>
    <property type="project" value="UniProtKB-KW"/>
</dbReference>
<dbReference type="CDD" id="cd15337">
    <property type="entry name" value="7tmA_Opsin_Gq_invertebrates"/>
    <property type="match status" value="1"/>
</dbReference>
<dbReference type="FunFam" id="1.20.1070.10:FF:000044">
    <property type="entry name" value="Opsin, ultraviolet-sensitive"/>
    <property type="match status" value="1"/>
</dbReference>
<dbReference type="Gene3D" id="1.20.1070.10">
    <property type="entry name" value="Rhodopsin 7-helix transmembrane proteins"/>
    <property type="match status" value="1"/>
</dbReference>
<dbReference type="InterPro" id="IPR050125">
    <property type="entry name" value="GPCR_opsins"/>
</dbReference>
<dbReference type="InterPro" id="IPR000276">
    <property type="entry name" value="GPCR_Rhodpsn"/>
</dbReference>
<dbReference type="InterPro" id="IPR017452">
    <property type="entry name" value="GPCR_Rhodpsn_7TM"/>
</dbReference>
<dbReference type="InterPro" id="IPR001760">
    <property type="entry name" value="Opsin"/>
</dbReference>
<dbReference type="InterPro" id="IPR027430">
    <property type="entry name" value="Retinal_BS"/>
</dbReference>
<dbReference type="InterPro" id="IPR006031">
    <property type="entry name" value="XYPPX"/>
</dbReference>
<dbReference type="PANTHER" id="PTHR24240">
    <property type="entry name" value="OPSIN"/>
    <property type="match status" value="1"/>
</dbReference>
<dbReference type="Pfam" id="PF00001">
    <property type="entry name" value="7tm_1"/>
    <property type="match status" value="1"/>
</dbReference>
<dbReference type="Pfam" id="PF02162">
    <property type="entry name" value="XYPPX"/>
    <property type="match status" value="4"/>
</dbReference>
<dbReference type="PRINTS" id="PR00237">
    <property type="entry name" value="GPCRRHODOPSN"/>
</dbReference>
<dbReference type="PRINTS" id="PR00238">
    <property type="entry name" value="OPSIN"/>
</dbReference>
<dbReference type="PRINTS" id="PR00239">
    <property type="entry name" value="RHODOPSNTAIL"/>
</dbReference>
<dbReference type="SMART" id="SM01381">
    <property type="entry name" value="7TM_GPCR_Srsx"/>
    <property type="match status" value="1"/>
</dbReference>
<dbReference type="SUPFAM" id="SSF81321">
    <property type="entry name" value="Family A G protein-coupled receptor-like"/>
    <property type="match status" value="1"/>
</dbReference>
<dbReference type="PROSITE" id="PS00237">
    <property type="entry name" value="G_PROTEIN_RECEP_F1_1"/>
    <property type="match status" value="1"/>
</dbReference>
<dbReference type="PROSITE" id="PS50262">
    <property type="entry name" value="G_PROTEIN_RECEP_F1_2"/>
    <property type="match status" value="1"/>
</dbReference>
<dbReference type="PROSITE" id="PS00238">
    <property type="entry name" value="OPSIN"/>
    <property type="match status" value="1"/>
</dbReference>
<name>OPSD_ENTDO</name>
<sequence>MVESTTLVNQTWWYNPTVDIHPHWAKFDPIPDAVYYSVGIFIGVVGIIGILGNGVVIYLFSKTKSLQTPANMFIINLAMSDLSFSAINGFPLKTISAFMKKWIFGKVACQLYGLLGGIFGFMSINTMAMISIDRYNVIGRPMAASKKMSHRRAFLMIIFVWMWSIVWSVGPVFNWGAYVPEGILTSCSFDYLSTDPSTRSFILCMYFCGFMLPIIIIAFCYFNIVMSVSNHEKEMAAMAKRLNAKELRKAQAGASAEMKLAKISMVIITQFMLSWSPYAIIALLAQFGPAEWVTPYAAELPVLFAKASAIHNPIVYSVSHPKFREAIQTTFPWLLTCCQFDEKECEDANDAEEEVVASERGGESRDAAQMKEMMAMMQKMQAQQAAYQPPPPPQGYPPQGYPPQGAYPPPQGYPPQGYPPQGYPPQGYPPQGAPPQVEAPQGAPPQGVDNQAYQA</sequence>
<comment type="function">
    <text evidence="2 3">Photoreceptor required for image-forming vision at low light intensity. Light-induced isomerization of 11-cis to all-trans retinal triggers a conformational change that activates signaling via G-proteins. Signaling mediates the activation of phospholipase C (By similarity). Subsequent receptor phosphorylation mediates displacement of the bound G-protein alpha subunit by arrestin and terminates signaling (By similarity).</text>
</comment>
<comment type="subcellular location">
    <subcellularLocation>
        <location evidence="3">Cell projection</location>
        <location evidence="3">Rhabdomere membrane</location>
        <topology evidence="3">Multi-pass membrane protein</topology>
    </subcellularLocation>
</comment>
<comment type="PTM">
    <text evidence="1 3">Contains one covalently linked retinal chromophore. Upon light absorption, the covalently bound 11-cis-retinal is converted to all-trans-retinal (By similarity). After hydrolysis of the Schiff base and release of the covalently bound all-trans-retinal, active rhodopsin is regenerated by binding of a fresh molecule of 11-cis-retinal (By similarity).</text>
</comment>
<comment type="similarity">
    <text evidence="5">Belongs to the G-protein coupled receptor 1 family. Opsin subfamily.</text>
</comment>
<proteinExistence type="evidence at transcript level"/>
<keyword id="KW-1003">Cell membrane</keyword>
<keyword id="KW-0966">Cell projection</keyword>
<keyword id="KW-0157">Chromophore</keyword>
<keyword id="KW-1015">Disulfide bond</keyword>
<keyword id="KW-0297">G-protein coupled receptor</keyword>
<keyword id="KW-0325">Glycoprotein</keyword>
<keyword id="KW-0449">Lipoprotein</keyword>
<keyword id="KW-0472">Membrane</keyword>
<keyword id="KW-0564">Palmitate</keyword>
<keyword id="KW-0597">Phosphoprotein</keyword>
<keyword id="KW-0600">Photoreceptor protein</keyword>
<keyword id="KW-0675">Receptor</keyword>
<keyword id="KW-0677">Repeat</keyword>
<keyword id="KW-0681">Retinal protein</keyword>
<keyword id="KW-0716">Sensory transduction</keyword>
<keyword id="KW-0807">Transducer</keyword>
<keyword id="KW-0812">Transmembrane</keyword>
<keyword id="KW-1133">Transmembrane helix</keyword>
<keyword id="KW-0844">Vision</keyword>
<accession>P09241</accession>
<feature type="chain" id="PRO_0000197734" description="Rhodopsin">
    <location>
        <begin position="1"/>
        <end position="455"/>
    </location>
</feature>
<feature type="topological domain" description="Extracellular" evidence="7">
    <location>
        <begin position="1"/>
        <end position="34"/>
    </location>
</feature>
<feature type="transmembrane region" description="Helical; Name=1" evidence="3">
    <location>
        <begin position="35"/>
        <end position="59"/>
    </location>
</feature>
<feature type="topological domain" description="Cytoplasmic" evidence="7">
    <location>
        <begin position="60"/>
        <end position="71"/>
    </location>
</feature>
<feature type="transmembrane region" description="Helical; Name=2" evidence="3">
    <location>
        <begin position="72"/>
        <end position="98"/>
    </location>
</feature>
<feature type="topological domain" description="Extracellular" evidence="7">
    <location>
        <begin position="99"/>
        <end position="110"/>
    </location>
</feature>
<feature type="transmembrane region" description="Helical; Name=3" evidence="3">
    <location>
        <begin position="111"/>
        <end position="132"/>
    </location>
</feature>
<feature type="topological domain" description="Cytoplasmic" evidence="7">
    <location>
        <begin position="133"/>
        <end position="152"/>
    </location>
</feature>
<feature type="transmembrane region" description="Helical; Name=4" evidence="3">
    <location>
        <begin position="153"/>
        <end position="173"/>
    </location>
</feature>
<feature type="topological domain" description="Extracellular" evidence="7">
    <location>
        <begin position="174"/>
        <end position="200"/>
    </location>
</feature>
<feature type="transmembrane region" description="Helical; Name=5" evidence="3">
    <location>
        <begin position="201"/>
        <end position="225"/>
    </location>
</feature>
<feature type="topological domain" description="Cytoplasmic" evidence="7">
    <location>
        <begin position="226"/>
        <end position="262"/>
    </location>
</feature>
<feature type="transmembrane region" description="Helical; Name=6" evidence="3">
    <location>
        <begin position="263"/>
        <end position="284"/>
    </location>
</feature>
<feature type="topological domain" description="Extracellular" evidence="7">
    <location>
        <begin position="285"/>
        <end position="294"/>
    </location>
</feature>
<feature type="transmembrane region" description="Helical; Name=7" evidence="3">
    <location>
        <begin position="295"/>
        <end position="316"/>
    </location>
</feature>
<feature type="topological domain" description="Cytoplasmic" evidence="7">
    <location>
        <begin position="317"/>
        <end position="455"/>
    </location>
</feature>
<feature type="repeat" description="1-1">
    <location>
        <begin position="395"/>
        <end position="399"/>
    </location>
</feature>
<feature type="repeat" description="1-2">
    <location>
        <begin position="400"/>
        <end position="404"/>
    </location>
</feature>
<feature type="repeat" description="2-1">
    <location>
        <begin position="412"/>
        <end position="416"/>
    </location>
</feature>
<feature type="repeat" description="2-2">
    <location>
        <begin position="417"/>
        <end position="421"/>
    </location>
</feature>
<feature type="repeat" description="3-1">
    <location>
        <begin position="422"/>
        <end position="426"/>
    </location>
</feature>
<feature type="repeat" description="3-2">
    <location>
        <begin position="427"/>
        <end position="431"/>
    </location>
</feature>
<feature type="region of interest" description="Disordered" evidence="6">
    <location>
        <begin position="378"/>
        <end position="455"/>
    </location>
</feature>
<feature type="region of interest" description="6 X 5 AA repeats of G-Y-P-P-Q">
    <location>
        <begin position="395"/>
        <end position="431"/>
    </location>
</feature>
<feature type="short sequence motif" description="'Ionic lock' involved in activated form stabilization" evidence="1">
    <location>
        <begin position="133"/>
        <end position="135"/>
    </location>
</feature>
<feature type="compositionally biased region" description="Low complexity" evidence="6">
    <location>
        <begin position="378"/>
        <end position="387"/>
    </location>
</feature>
<feature type="compositionally biased region" description="Pro residues" evidence="6">
    <location>
        <begin position="388"/>
        <end position="433"/>
    </location>
</feature>
<feature type="modified residue" description="N6-(retinylidene)lysine" evidence="1">
    <location>
        <position position="306"/>
    </location>
</feature>
<feature type="lipid moiety-binding region" description="S-palmitoyl cysteine" evidence="1">
    <location>
        <position position="337"/>
    </location>
</feature>
<feature type="lipid moiety-binding region" description="S-palmitoyl cysteine" evidence="1">
    <location>
        <position position="338"/>
    </location>
</feature>
<feature type="glycosylation site" description="N-linked (GlcNAc...) asparagine" evidence="4">
    <location>
        <position position="9"/>
    </location>
</feature>
<feature type="disulfide bond" evidence="5">
    <location>
        <begin position="109"/>
        <end position="187"/>
    </location>
</feature>